<proteinExistence type="evidence at protein level"/>
<name>TFS_THECE</name>
<feature type="chain" id="PRO_0000121483" description="Transcription factor S">
    <location>
        <begin position="1"/>
        <end position="110"/>
    </location>
</feature>
<feature type="zinc finger region" description="C4-type" evidence="2">
    <location>
        <begin position="4"/>
        <end position="25"/>
    </location>
</feature>
<feature type="zinc finger region" description="TFIIS-type" evidence="3">
    <location>
        <begin position="67"/>
        <end position="107"/>
    </location>
</feature>
<feature type="binding site" evidence="4">
    <location>
        <position position="4"/>
    </location>
    <ligand>
        <name>Zn(2+)</name>
        <dbReference type="ChEBI" id="CHEBI:29105"/>
        <label>1</label>
    </ligand>
</feature>
<feature type="binding site" evidence="4">
    <location>
        <position position="7"/>
    </location>
    <ligand>
        <name>Zn(2+)</name>
        <dbReference type="ChEBI" id="CHEBI:29105"/>
        <label>1</label>
    </ligand>
</feature>
<feature type="binding site" evidence="4">
    <location>
        <position position="22"/>
    </location>
    <ligand>
        <name>Zn(2+)</name>
        <dbReference type="ChEBI" id="CHEBI:29105"/>
        <label>1</label>
    </ligand>
</feature>
<feature type="binding site" evidence="4">
    <location>
        <position position="25"/>
    </location>
    <ligand>
        <name>Zn(2+)</name>
        <dbReference type="ChEBI" id="CHEBI:29105"/>
        <label>1</label>
    </ligand>
</feature>
<feature type="binding site" evidence="3 5">
    <location>
        <position position="71"/>
    </location>
    <ligand>
        <name>Zn(2+)</name>
        <dbReference type="ChEBI" id="CHEBI:29105"/>
        <label>2</label>
    </ligand>
</feature>
<feature type="binding site" evidence="3 5">
    <location>
        <position position="74"/>
    </location>
    <ligand>
        <name>Zn(2+)</name>
        <dbReference type="ChEBI" id="CHEBI:29105"/>
        <label>2</label>
    </ligand>
</feature>
<feature type="binding site" evidence="3 5">
    <location>
        <position position="99"/>
    </location>
    <ligand>
        <name>Zn(2+)</name>
        <dbReference type="ChEBI" id="CHEBI:29105"/>
        <label>2</label>
    </ligand>
</feature>
<feature type="binding site" evidence="3 5">
    <location>
        <position position="102"/>
    </location>
    <ligand>
        <name>Zn(2+)</name>
        <dbReference type="ChEBI" id="CHEBI:29105"/>
        <label>2</label>
    </ligand>
</feature>
<feature type="strand" evidence="7">
    <location>
        <begin position="62"/>
        <end position="64"/>
    </location>
</feature>
<feature type="strand" evidence="7">
    <location>
        <begin position="66"/>
        <end position="68"/>
    </location>
</feature>
<feature type="turn" evidence="7">
    <location>
        <begin position="72"/>
        <end position="74"/>
    </location>
</feature>
<feature type="strand" evidence="7">
    <location>
        <begin position="77"/>
        <end position="84"/>
    </location>
</feature>
<feature type="strand" evidence="7">
    <location>
        <begin position="87"/>
        <end position="90"/>
    </location>
</feature>
<feature type="strand" evidence="7">
    <location>
        <begin position="92"/>
        <end position="102"/>
    </location>
</feature>
<feature type="strand" evidence="7">
    <location>
        <begin position="105"/>
        <end position="107"/>
    </location>
</feature>
<accession>Q56254</accession>
<protein>
    <recommendedName>
        <fullName evidence="1">Transcription factor S</fullName>
    </recommendedName>
    <alternativeName>
        <fullName evidence="1">Transcription elongation factor IIS/RNA polymerase subunit homolog</fullName>
        <shortName evidence="1">TFIIS/RPSU homolog</shortName>
    </alternativeName>
</protein>
<keyword id="KW-0002">3D-structure</keyword>
<keyword id="KW-0238">DNA-binding</keyword>
<keyword id="KW-0240">DNA-directed RNA polymerase</keyword>
<keyword id="KW-0479">Metal-binding</keyword>
<keyword id="KW-0804">Transcription</keyword>
<keyword id="KW-0805">Transcription regulation</keyword>
<keyword id="KW-0862">Zinc</keyword>
<keyword id="KW-0863">Zinc-finger</keyword>
<dbReference type="EMBL" id="L27650">
    <property type="protein sequence ID" value="AAA72052.1"/>
    <property type="molecule type" value="Unassigned_DNA"/>
</dbReference>
<dbReference type="PIR" id="A55263">
    <property type="entry name" value="A55263"/>
</dbReference>
<dbReference type="PDB" id="1QYP">
    <property type="method" value="NMR"/>
    <property type="chains" value="A=58-110"/>
</dbReference>
<dbReference type="PDBsum" id="1QYP"/>
<dbReference type="SMR" id="Q56254"/>
<dbReference type="EvolutionaryTrace" id="Q56254"/>
<dbReference type="GO" id="GO:0000428">
    <property type="term" value="C:DNA-directed RNA polymerase complex"/>
    <property type="evidence" value="ECO:0007669"/>
    <property type="project" value="UniProtKB-KW"/>
</dbReference>
<dbReference type="GO" id="GO:0003677">
    <property type="term" value="F:DNA binding"/>
    <property type="evidence" value="ECO:0007669"/>
    <property type="project" value="UniProtKB-KW"/>
</dbReference>
<dbReference type="GO" id="GO:0003899">
    <property type="term" value="F:DNA-directed RNA polymerase activity"/>
    <property type="evidence" value="ECO:0007669"/>
    <property type="project" value="InterPro"/>
</dbReference>
<dbReference type="GO" id="GO:0008270">
    <property type="term" value="F:zinc ion binding"/>
    <property type="evidence" value="ECO:0000314"/>
    <property type="project" value="UniProtKB"/>
</dbReference>
<dbReference type="GO" id="GO:0006351">
    <property type="term" value="P:DNA-templated transcription"/>
    <property type="evidence" value="ECO:0007669"/>
    <property type="project" value="InterPro"/>
</dbReference>
<dbReference type="GO" id="GO:0006355">
    <property type="term" value="P:regulation of DNA-templated transcription"/>
    <property type="evidence" value="ECO:0000250"/>
    <property type="project" value="UniProtKB"/>
</dbReference>
<dbReference type="CDD" id="cd10511">
    <property type="entry name" value="Zn-ribbon_TFS"/>
    <property type="match status" value="1"/>
</dbReference>
<dbReference type="FunFam" id="2.20.25.10:FF:000029">
    <property type="entry name" value="DNA-directed RNA polymerase subunit M"/>
    <property type="match status" value="1"/>
</dbReference>
<dbReference type="Gene3D" id="2.20.25.10">
    <property type="match status" value="2"/>
</dbReference>
<dbReference type="InterPro" id="IPR019761">
    <property type="entry name" value="DNA-dir_RNA_pol-M_15_CS"/>
</dbReference>
<dbReference type="InterPro" id="IPR012164">
    <property type="entry name" value="Rpa12/Rpb9/Rpc10/TFS"/>
</dbReference>
<dbReference type="InterPro" id="IPR006288">
    <property type="entry name" value="TFS"/>
</dbReference>
<dbReference type="InterPro" id="IPR001529">
    <property type="entry name" value="Zn_ribbon_RPB9"/>
</dbReference>
<dbReference type="InterPro" id="IPR001222">
    <property type="entry name" value="Znf_TFIIS"/>
</dbReference>
<dbReference type="NCBIfam" id="TIGR01384">
    <property type="entry name" value="TFS_arch"/>
    <property type="match status" value="1"/>
</dbReference>
<dbReference type="PANTHER" id="PTHR11239">
    <property type="entry name" value="DNA-DIRECTED RNA POLYMERASE"/>
    <property type="match status" value="1"/>
</dbReference>
<dbReference type="PANTHER" id="PTHR11239:SF12">
    <property type="entry name" value="DNA-DIRECTED RNA POLYMERASE III SUBUNIT RPC10"/>
    <property type="match status" value="1"/>
</dbReference>
<dbReference type="Pfam" id="PF02150">
    <property type="entry name" value="Zn_ribbon_RPB9"/>
    <property type="match status" value="1"/>
</dbReference>
<dbReference type="Pfam" id="PF01096">
    <property type="entry name" value="Zn_ribbon_TFIIS"/>
    <property type="match status" value="1"/>
</dbReference>
<dbReference type="PIRSF" id="PIRSF005586">
    <property type="entry name" value="RNApol_RpoM"/>
    <property type="match status" value="1"/>
</dbReference>
<dbReference type="SMART" id="SM00661">
    <property type="entry name" value="RPOL9"/>
    <property type="match status" value="1"/>
</dbReference>
<dbReference type="SMART" id="SM00440">
    <property type="entry name" value="ZnF_C2C2"/>
    <property type="match status" value="1"/>
</dbReference>
<dbReference type="SUPFAM" id="SSF57783">
    <property type="entry name" value="Zinc beta-ribbon"/>
    <property type="match status" value="2"/>
</dbReference>
<dbReference type="PROSITE" id="PS01030">
    <property type="entry name" value="RNA_POL_M_15KD"/>
    <property type="match status" value="1"/>
</dbReference>
<dbReference type="PROSITE" id="PS00466">
    <property type="entry name" value="ZF_TFIIS_1"/>
    <property type="match status" value="1"/>
</dbReference>
<dbReference type="PROSITE" id="PS51133">
    <property type="entry name" value="ZF_TFIIS_2"/>
    <property type="match status" value="1"/>
</dbReference>
<gene>
    <name evidence="1" type="primary">tfs</name>
</gene>
<evidence type="ECO:0000250" key="1">
    <source>
        <dbReference type="UniProtKB" id="Q9P9I8"/>
    </source>
</evidence>
<evidence type="ECO:0000255" key="2"/>
<evidence type="ECO:0000255" key="3">
    <source>
        <dbReference type="PROSITE-ProRule" id="PRU00472"/>
    </source>
</evidence>
<evidence type="ECO:0000255" key="4">
    <source>
        <dbReference type="PROSITE-ProRule" id="PRU10145"/>
    </source>
</evidence>
<evidence type="ECO:0000269" key="5">
    <source>
    </source>
</evidence>
<evidence type="ECO:0000305" key="6"/>
<evidence type="ECO:0007829" key="7">
    <source>
        <dbReference type="PDB" id="1QYP"/>
    </source>
</evidence>
<sequence>MKFCPKCGNLMLPDRKRKVWVCRSCGYEEPFDEEKDREKTVIKQEVKHKPDEGIVVIEQDLKTLPTTKITCPKCGNDTAYWWEMQTRAGDEPSTIFYKCTKCGHTWRSYE</sequence>
<reference key="1">
    <citation type="journal article" date="1994" name="Proc. Natl. Acad. Sci. U.S.A.">
        <title>The sequence, and its evolutionary implications, of a Thermococcus celer protein associated with transcription.</title>
        <authorList>
            <person name="Kaine B.P."/>
            <person name="Mehr I.J."/>
            <person name="Woese C.R."/>
        </authorList>
    </citation>
    <scope>NUCLEOTIDE SEQUENCE [GENOMIC DNA]</scope>
</reference>
<reference key="2">
    <citation type="journal article" date="1998" name="Structure">
        <title>High-resolution structure of an archaeal zinc ribbon defines a general architectural motif in eukaryotic RNA polymerases.</title>
        <authorList>
            <person name="Wang B."/>
            <person name="Jones D.N.M."/>
            <person name="Kaine B.P."/>
            <person name="Weiss M.A."/>
        </authorList>
    </citation>
    <scope>STRUCTURE BY NMR OF 58-110 IN COMPLEX WITH ZINC</scope>
</reference>
<comment type="function">
    <text evidence="1">Induces RNA cleavage activity in the RNA polymerase. In its presence, the cleavage activity of the RNA polymerase truncates the RNA back to position +15 in a stepwise manner by releasing mainly dinucleotides from the 3'-end of the nascent RNA. The truncated RNAs are able to continue elongation. Involved in transcriptional proofreading and fidelity. Misincorporation of nucleotides during elongation of transcription leads to arrested elongation complexes which are rescued by TFS-promoted removal of a dinucleotide from the 3'-end. TFS is able to induce a cleavage resynthesis cycle in stalled elongation complexes (resulting from the next missing nucleotide or a reduced incorporation rate of a wrong nucleotide) preventing misincorporation and enabling proofreading in a post-incorporation manner. Pausing of elongation complexes is the main determinant of TFS-induced RNA cleavage.</text>
</comment>
<comment type="similarity">
    <text evidence="6">Belongs to the archaeal RpoM/eukaryotic RPA12/RPB9/RPC11 RNA polymerase family.</text>
</comment>
<comment type="caution">
    <text evidence="6">More similar by sequence similarity to the eukaryotic RNA polymerase subunits.</text>
</comment>
<organism>
    <name type="scientific">Thermococcus celer</name>
    <dbReference type="NCBI Taxonomy" id="2264"/>
    <lineage>
        <taxon>Archaea</taxon>
        <taxon>Methanobacteriati</taxon>
        <taxon>Methanobacteriota</taxon>
        <taxon>Thermococci</taxon>
        <taxon>Thermococcales</taxon>
        <taxon>Thermococcaceae</taxon>
        <taxon>Thermococcus</taxon>
    </lineage>
</organism>